<feature type="chain" id="PRO_1000142103" description="Large ribosomal subunit protein uL4">
    <location>
        <begin position="1"/>
        <end position="222"/>
    </location>
</feature>
<organism>
    <name type="scientific">Chlamydia trachomatis serovar L2b (strain UCH-1/proctitis)</name>
    <dbReference type="NCBI Taxonomy" id="471473"/>
    <lineage>
        <taxon>Bacteria</taxon>
        <taxon>Pseudomonadati</taxon>
        <taxon>Chlamydiota</taxon>
        <taxon>Chlamydiia</taxon>
        <taxon>Chlamydiales</taxon>
        <taxon>Chlamydiaceae</taxon>
        <taxon>Chlamydia/Chlamydophila group</taxon>
        <taxon>Chlamydia</taxon>
    </lineage>
</organism>
<proteinExistence type="inferred from homology"/>
<gene>
    <name evidence="1" type="primary">rplD</name>
    <name type="ordered locus">CTLon_0784</name>
</gene>
<protein>
    <recommendedName>
        <fullName evidence="1">Large ribosomal subunit protein uL4</fullName>
    </recommendedName>
    <alternativeName>
        <fullName evidence="2">50S ribosomal protein L4</fullName>
    </alternativeName>
</protein>
<comment type="function">
    <text evidence="1">One of the primary rRNA binding proteins, this protein initially binds near the 5'-end of the 23S rRNA. It is important during the early stages of 50S assembly. It makes multiple contacts with different domains of the 23S rRNA in the assembled 50S subunit and ribosome.</text>
</comment>
<comment type="function">
    <text evidence="1">Forms part of the polypeptide exit tunnel.</text>
</comment>
<comment type="subunit">
    <text evidence="1">Part of the 50S ribosomal subunit.</text>
</comment>
<comment type="similarity">
    <text evidence="1">Belongs to the universal ribosomal protein uL4 family.</text>
</comment>
<evidence type="ECO:0000255" key="1">
    <source>
        <dbReference type="HAMAP-Rule" id="MF_01328"/>
    </source>
</evidence>
<evidence type="ECO:0000305" key="2"/>
<accession>B0BCG6</accession>
<name>RL4_CHLTB</name>
<keyword id="KW-0687">Ribonucleoprotein</keyword>
<keyword id="KW-0689">Ribosomal protein</keyword>
<keyword id="KW-0694">RNA-binding</keyword>
<keyword id="KW-0699">rRNA-binding</keyword>
<reference key="1">
    <citation type="journal article" date="2008" name="Genome Res.">
        <title>Chlamydia trachomatis: genome sequence analysis of lymphogranuloma venereum isolates.</title>
        <authorList>
            <person name="Thomson N.R."/>
            <person name="Holden M.T.G."/>
            <person name="Carder C."/>
            <person name="Lennard N."/>
            <person name="Lockey S.J."/>
            <person name="Marsh P."/>
            <person name="Skipp P."/>
            <person name="O'Connor C.D."/>
            <person name="Goodhead I."/>
            <person name="Norbertzcak H."/>
            <person name="Harris B."/>
            <person name="Ormond D."/>
            <person name="Rance R."/>
            <person name="Quail M.A."/>
            <person name="Parkhill J."/>
            <person name="Stephens R.S."/>
            <person name="Clarke I.N."/>
        </authorList>
    </citation>
    <scope>NUCLEOTIDE SEQUENCE [LARGE SCALE GENOMIC DNA]</scope>
    <source>
        <strain>UCH-1/proctitis</strain>
    </source>
</reference>
<dbReference type="EMBL" id="AM884177">
    <property type="protein sequence ID" value="CAP07181.1"/>
    <property type="molecule type" value="Genomic_DNA"/>
</dbReference>
<dbReference type="RefSeq" id="WP_009873875.1">
    <property type="nucleotide sequence ID" value="NC_010280.2"/>
</dbReference>
<dbReference type="SMR" id="B0BCG6"/>
<dbReference type="KEGG" id="ctl:CTLon_0784"/>
<dbReference type="HOGENOM" id="CLU_041575_5_2_0"/>
<dbReference type="Proteomes" id="UP001154401">
    <property type="component" value="Chromosome"/>
</dbReference>
<dbReference type="GO" id="GO:1990904">
    <property type="term" value="C:ribonucleoprotein complex"/>
    <property type="evidence" value="ECO:0007669"/>
    <property type="project" value="UniProtKB-KW"/>
</dbReference>
<dbReference type="GO" id="GO:0005840">
    <property type="term" value="C:ribosome"/>
    <property type="evidence" value="ECO:0007669"/>
    <property type="project" value="UniProtKB-KW"/>
</dbReference>
<dbReference type="GO" id="GO:0019843">
    <property type="term" value="F:rRNA binding"/>
    <property type="evidence" value="ECO:0007669"/>
    <property type="project" value="UniProtKB-UniRule"/>
</dbReference>
<dbReference type="GO" id="GO:0003735">
    <property type="term" value="F:structural constituent of ribosome"/>
    <property type="evidence" value="ECO:0007669"/>
    <property type="project" value="InterPro"/>
</dbReference>
<dbReference type="GO" id="GO:0006412">
    <property type="term" value="P:translation"/>
    <property type="evidence" value="ECO:0007669"/>
    <property type="project" value="UniProtKB-UniRule"/>
</dbReference>
<dbReference type="Gene3D" id="3.40.1370.10">
    <property type="match status" value="1"/>
</dbReference>
<dbReference type="HAMAP" id="MF_01328_B">
    <property type="entry name" value="Ribosomal_uL4_B"/>
    <property type="match status" value="1"/>
</dbReference>
<dbReference type="InterPro" id="IPR002136">
    <property type="entry name" value="Ribosomal_uL4"/>
</dbReference>
<dbReference type="InterPro" id="IPR013005">
    <property type="entry name" value="Ribosomal_uL4-like"/>
</dbReference>
<dbReference type="InterPro" id="IPR023574">
    <property type="entry name" value="Ribosomal_uL4_dom_sf"/>
</dbReference>
<dbReference type="NCBIfam" id="TIGR03953">
    <property type="entry name" value="rplD_bact"/>
    <property type="match status" value="1"/>
</dbReference>
<dbReference type="PANTHER" id="PTHR10746">
    <property type="entry name" value="50S RIBOSOMAL PROTEIN L4"/>
    <property type="match status" value="1"/>
</dbReference>
<dbReference type="PANTHER" id="PTHR10746:SF6">
    <property type="entry name" value="LARGE RIBOSOMAL SUBUNIT PROTEIN UL4M"/>
    <property type="match status" value="1"/>
</dbReference>
<dbReference type="Pfam" id="PF00573">
    <property type="entry name" value="Ribosomal_L4"/>
    <property type="match status" value="1"/>
</dbReference>
<dbReference type="SUPFAM" id="SSF52166">
    <property type="entry name" value="Ribosomal protein L4"/>
    <property type="match status" value="1"/>
</dbReference>
<sequence length="222" mass="24590">MVLLSKFDFSGKELGKFELPDAFFTEGREQSVKDYLVAIQANKRQWSACTRGRSEVSHSTKKPFRQKGTGNARQGCLAAPQFRGGGIVFGPKPKFDQHIRINKKERRAAIRLLLAQKIQTGKLIVAENSVFVSSLDAPKTKEALRFLKECNVECRGVLFVDSLAHVGSNENLRLSVRNLSAVRGFTYGENISGYDIAAARNIVVSEKALELLVESLVSTTKD</sequence>